<name>SYT_STRPB</name>
<gene>
    <name evidence="1" type="primary">thrS</name>
    <name type="ordered locus">MGAS2096_Spy0446</name>
</gene>
<comment type="function">
    <text evidence="1">Catalyzes the attachment of threonine to tRNA(Thr) in a two-step reaction: L-threonine is first activated by ATP to form Thr-AMP and then transferred to the acceptor end of tRNA(Thr). Also edits incorrectly charged L-seryl-tRNA(Thr).</text>
</comment>
<comment type="catalytic activity">
    <reaction evidence="1">
        <text>tRNA(Thr) + L-threonine + ATP = L-threonyl-tRNA(Thr) + AMP + diphosphate + H(+)</text>
        <dbReference type="Rhea" id="RHEA:24624"/>
        <dbReference type="Rhea" id="RHEA-COMP:9670"/>
        <dbReference type="Rhea" id="RHEA-COMP:9704"/>
        <dbReference type="ChEBI" id="CHEBI:15378"/>
        <dbReference type="ChEBI" id="CHEBI:30616"/>
        <dbReference type="ChEBI" id="CHEBI:33019"/>
        <dbReference type="ChEBI" id="CHEBI:57926"/>
        <dbReference type="ChEBI" id="CHEBI:78442"/>
        <dbReference type="ChEBI" id="CHEBI:78534"/>
        <dbReference type="ChEBI" id="CHEBI:456215"/>
        <dbReference type="EC" id="6.1.1.3"/>
    </reaction>
</comment>
<comment type="cofactor">
    <cofactor evidence="1">
        <name>Zn(2+)</name>
        <dbReference type="ChEBI" id="CHEBI:29105"/>
    </cofactor>
    <text evidence="1">Binds 1 zinc ion per subunit.</text>
</comment>
<comment type="subunit">
    <text evidence="1">Homodimer.</text>
</comment>
<comment type="subcellular location">
    <subcellularLocation>
        <location evidence="1">Cytoplasm</location>
    </subcellularLocation>
</comment>
<comment type="similarity">
    <text evidence="1">Belongs to the class-II aminoacyl-tRNA synthetase family.</text>
</comment>
<organism>
    <name type="scientific">Streptococcus pyogenes serotype M12 (strain MGAS2096)</name>
    <dbReference type="NCBI Taxonomy" id="370553"/>
    <lineage>
        <taxon>Bacteria</taxon>
        <taxon>Bacillati</taxon>
        <taxon>Bacillota</taxon>
        <taxon>Bacilli</taxon>
        <taxon>Lactobacillales</taxon>
        <taxon>Streptococcaceae</taxon>
        <taxon>Streptococcus</taxon>
    </lineage>
</organism>
<feature type="chain" id="PRO_1000020527" description="Threonine--tRNA ligase">
    <location>
        <begin position="1"/>
        <end position="647"/>
    </location>
</feature>
<feature type="domain" description="TGS" evidence="2">
    <location>
        <begin position="1"/>
        <end position="61"/>
    </location>
</feature>
<feature type="region of interest" description="Catalytic" evidence="1">
    <location>
        <begin position="240"/>
        <end position="538"/>
    </location>
</feature>
<feature type="binding site" evidence="1">
    <location>
        <position position="334"/>
    </location>
    <ligand>
        <name>Zn(2+)</name>
        <dbReference type="ChEBI" id="CHEBI:29105"/>
    </ligand>
</feature>
<feature type="binding site" evidence="1">
    <location>
        <position position="385"/>
    </location>
    <ligand>
        <name>Zn(2+)</name>
        <dbReference type="ChEBI" id="CHEBI:29105"/>
    </ligand>
</feature>
<feature type="binding site" evidence="1">
    <location>
        <position position="515"/>
    </location>
    <ligand>
        <name>Zn(2+)</name>
        <dbReference type="ChEBI" id="CHEBI:29105"/>
    </ligand>
</feature>
<sequence length="647" mass="74275">MIKITFPDGAVREFESGVTTFDIAESISKSLAKKALAGKFNDQLIDTTRAIEEDGSIEIVTPDHKDAYEVLRHSAAHLFAQAAKRLFPNLHLGVGPAIAEGFYYDTDNAEGQISNEDLPRIEAEMQKIVTENYPCIREEVTKEEALELFKDDPYKVELINEHAGAGLTVYRQGEFVDLCRGPHVPSTGRIQVFHLLNVAGAYWRGNSDNNMMQRIYGTAWFDKKDLKAYLTRLEEAKERDHRKLGKELDLFMISQEVGQGLPFWLPDGATIRRTLERYITDKELASGYQHVYTPPLASVELYKTSGHWDHYQEDMFPVMDMGDGEEFVLRPMNCPHHIQVYKNHVRSYRELPIRIAELGMMHRYEKSGALSGLQRVREMTLNDGHIFVTPEQIQEEFQRALQLIIDVYADFNLTDYRFRLSYRDPNDTHKYYDNDEMWENAQSMLKAALDEMGVDYFEAEGEAAFYGPKLDIQVKTALGNEETLSTIQLDFLLPERFDLKYIGADGEEHRPVMIHRGVISTMERFTAILIETYKGAFPTWLAPHQVTVIPISNEAHIDYAWEVAKTLRDRGVRADVDDRNEKMQYKIRASQTSKIPYQLIVGDKEMEDKSVNVRRYGSKATHTESVEEFVENILADIARKSRPDAQA</sequence>
<dbReference type="EC" id="6.1.1.3" evidence="1"/>
<dbReference type="EMBL" id="CP000261">
    <property type="protein sequence ID" value="ABF35498.1"/>
    <property type="molecule type" value="Genomic_DNA"/>
</dbReference>
<dbReference type="SMR" id="Q1JD10"/>
<dbReference type="KEGG" id="spj:MGAS2096_Spy0446"/>
<dbReference type="HOGENOM" id="CLU_008554_0_1_9"/>
<dbReference type="GO" id="GO:0005737">
    <property type="term" value="C:cytoplasm"/>
    <property type="evidence" value="ECO:0007669"/>
    <property type="project" value="UniProtKB-SubCell"/>
</dbReference>
<dbReference type="GO" id="GO:0005524">
    <property type="term" value="F:ATP binding"/>
    <property type="evidence" value="ECO:0007669"/>
    <property type="project" value="UniProtKB-UniRule"/>
</dbReference>
<dbReference type="GO" id="GO:0140096">
    <property type="term" value="F:catalytic activity, acting on a protein"/>
    <property type="evidence" value="ECO:0007669"/>
    <property type="project" value="UniProtKB-ARBA"/>
</dbReference>
<dbReference type="GO" id="GO:0046872">
    <property type="term" value="F:metal ion binding"/>
    <property type="evidence" value="ECO:0007669"/>
    <property type="project" value="UniProtKB-KW"/>
</dbReference>
<dbReference type="GO" id="GO:0004829">
    <property type="term" value="F:threonine-tRNA ligase activity"/>
    <property type="evidence" value="ECO:0007669"/>
    <property type="project" value="UniProtKB-UniRule"/>
</dbReference>
<dbReference type="GO" id="GO:0016740">
    <property type="term" value="F:transferase activity"/>
    <property type="evidence" value="ECO:0007669"/>
    <property type="project" value="UniProtKB-ARBA"/>
</dbReference>
<dbReference type="GO" id="GO:0000049">
    <property type="term" value="F:tRNA binding"/>
    <property type="evidence" value="ECO:0007669"/>
    <property type="project" value="UniProtKB-KW"/>
</dbReference>
<dbReference type="GO" id="GO:0006435">
    <property type="term" value="P:threonyl-tRNA aminoacylation"/>
    <property type="evidence" value="ECO:0007669"/>
    <property type="project" value="UniProtKB-UniRule"/>
</dbReference>
<dbReference type="CDD" id="cd01667">
    <property type="entry name" value="TGS_ThrRS"/>
    <property type="match status" value="1"/>
</dbReference>
<dbReference type="CDD" id="cd00860">
    <property type="entry name" value="ThrRS_anticodon"/>
    <property type="match status" value="1"/>
</dbReference>
<dbReference type="CDD" id="cd00771">
    <property type="entry name" value="ThrRS_core"/>
    <property type="match status" value="1"/>
</dbReference>
<dbReference type="FunFam" id="3.10.20.30:FF:000005">
    <property type="entry name" value="Threonine--tRNA ligase"/>
    <property type="match status" value="1"/>
</dbReference>
<dbReference type="FunFam" id="3.30.54.20:FF:000002">
    <property type="entry name" value="Threonine--tRNA ligase"/>
    <property type="match status" value="1"/>
</dbReference>
<dbReference type="FunFam" id="3.30.930.10:FF:000002">
    <property type="entry name" value="Threonine--tRNA ligase"/>
    <property type="match status" value="1"/>
</dbReference>
<dbReference type="FunFam" id="3.40.50.800:FF:000001">
    <property type="entry name" value="Threonine--tRNA ligase"/>
    <property type="match status" value="1"/>
</dbReference>
<dbReference type="FunFam" id="3.30.980.10:FF:000005">
    <property type="entry name" value="Threonyl-tRNA synthetase, mitochondrial"/>
    <property type="match status" value="1"/>
</dbReference>
<dbReference type="Gene3D" id="3.10.20.30">
    <property type="match status" value="1"/>
</dbReference>
<dbReference type="Gene3D" id="3.30.54.20">
    <property type="match status" value="1"/>
</dbReference>
<dbReference type="Gene3D" id="3.40.50.800">
    <property type="entry name" value="Anticodon-binding domain"/>
    <property type="match status" value="1"/>
</dbReference>
<dbReference type="Gene3D" id="3.30.930.10">
    <property type="entry name" value="Bira Bifunctional Protein, Domain 2"/>
    <property type="match status" value="1"/>
</dbReference>
<dbReference type="Gene3D" id="3.30.980.10">
    <property type="entry name" value="Threonyl-trna Synthetase, Chain A, domain 2"/>
    <property type="match status" value="1"/>
</dbReference>
<dbReference type="HAMAP" id="MF_00184">
    <property type="entry name" value="Thr_tRNA_synth"/>
    <property type="match status" value="1"/>
</dbReference>
<dbReference type="InterPro" id="IPR002314">
    <property type="entry name" value="aa-tRNA-synt_IIb"/>
</dbReference>
<dbReference type="InterPro" id="IPR006195">
    <property type="entry name" value="aa-tRNA-synth_II"/>
</dbReference>
<dbReference type="InterPro" id="IPR045864">
    <property type="entry name" value="aa-tRNA-synth_II/BPL/LPL"/>
</dbReference>
<dbReference type="InterPro" id="IPR004154">
    <property type="entry name" value="Anticodon-bd"/>
</dbReference>
<dbReference type="InterPro" id="IPR036621">
    <property type="entry name" value="Anticodon-bd_dom_sf"/>
</dbReference>
<dbReference type="InterPro" id="IPR012675">
    <property type="entry name" value="Beta-grasp_dom_sf"/>
</dbReference>
<dbReference type="InterPro" id="IPR004095">
    <property type="entry name" value="TGS"/>
</dbReference>
<dbReference type="InterPro" id="IPR012676">
    <property type="entry name" value="TGS-like"/>
</dbReference>
<dbReference type="InterPro" id="IPR002320">
    <property type="entry name" value="Thr-tRNA-ligase_IIa"/>
</dbReference>
<dbReference type="InterPro" id="IPR018163">
    <property type="entry name" value="Thr/Ala-tRNA-synth_IIc_edit"/>
</dbReference>
<dbReference type="InterPro" id="IPR047246">
    <property type="entry name" value="ThrRS_anticodon"/>
</dbReference>
<dbReference type="InterPro" id="IPR033728">
    <property type="entry name" value="ThrRS_core"/>
</dbReference>
<dbReference type="InterPro" id="IPR012947">
    <property type="entry name" value="tRNA_SAD"/>
</dbReference>
<dbReference type="NCBIfam" id="TIGR00418">
    <property type="entry name" value="thrS"/>
    <property type="match status" value="1"/>
</dbReference>
<dbReference type="PANTHER" id="PTHR11451:SF56">
    <property type="entry name" value="THREONINE--TRNA LIGASE 1"/>
    <property type="match status" value="1"/>
</dbReference>
<dbReference type="PANTHER" id="PTHR11451">
    <property type="entry name" value="THREONINE-TRNA LIGASE"/>
    <property type="match status" value="1"/>
</dbReference>
<dbReference type="Pfam" id="PF03129">
    <property type="entry name" value="HGTP_anticodon"/>
    <property type="match status" value="1"/>
</dbReference>
<dbReference type="Pfam" id="PF02824">
    <property type="entry name" value="TGS"/>
    <property type="match status" value="1"/>
</dbReference>
<dbReference type="Pfam" id="PF00587">
    <property type="entry name" value="tRNA-synt_2b"/>
    <property type="match status" value="1"/>
</dbReference>
<dbReference type="Pfam" id="PF07973">
    <property type="entry name" value="tRNA_SAD"/>
    <property type="match status" value="1"/>
</dbReference>
<dbReference type="PRINTS" id="PR01047">
    <property type="entry name" value="TRNASYNTHTHR"/>
</dbReference>
<dbReference type="SMART" id="SM00863">
    <property type="entry name" value="tRNA_SAD"/>
    <property type="match status" value="1"/>
</dbReference>
<dbReference type="SUPFAM" id="SSF52954">
    <property type="entry name" value="Class II aaRS ABD-related"/>
    <property type="match status" value="1"/>
</dbReference>
<dbReference type="SUPFAM" id="SSF55681">
    <property type="entry name" value="Class II aaRS and biotin synthetases"/>
    <property type="match status" value="1"/>
</dbReference>
<dbReference type="SUPFAM" id="SSF81271">
    <property type="entry name" value="TGS-like"/>
    <property type="match status" value="1"/>
</dbReference>
<dbReference type="SUPFAM" id="SSF55186">
    <property type="entry name" value="ThrRS/AlaRS common domain"/>
    <property type="match status" value="1"/>
</dbReference>
<dbReference type="PROSITE" id="PS50862">
    <property type="entry name" value="AA_TRNA_LIGASE_II"/>
    <property type="match status" value="1"/>
</dbReference>
<dbReference type="PROSITE" id="PS51880">
    <property type="entry name" value="TGS"/>
    <property type="match status" value="1"/>
</dbReference>
<accession>Q1JD10</accession>
<proteinExistence type="inferred from homology"/>
<protein>
    <recommendedName>
        <fullName evidence="1">Threonine--tRNA ligase</fullName>
        <ecNumber evidence="1">6.1.1.3</ecNumber>
    </recommendedName>
    <alternativeName>
        <fullName evidence="1">Threonyl-tRNA synthetase</fullName>
        <shortName evidence="1">ThrRS</shortName>
    </alternativeName>
</protein>
<evidence type="ECO:0000255" key="1">
    <source>
        <dbReference type="HAMAP-Rule" id="MF_00184"/>
    </source>
</evidence>
<evidence type="ECO:0000255" key="2">
    <source>
        <dbReference type="PROSITE-ProRule" id="PRU01228"/>
    </source>
</evidence>
<keyword id="KW-0030">Aminoacyl-tRNA synthetase</keyword>
<keyword id="KW-0067">ATP-binding</keyword>
<keyword id="KW-0963">Cytoplasm</keyword>
<keyword id="KW-0436">Ligase</keyword>
<keyword id="KW-0479">Metal-binding</keyword>
<keyword id="KW-0547">Nucleotide-binding</keyword>
<keyword id="KW-0648">Protein biosynthesis</keyword>
<keyword id="KW-0694">RNA-binding</keyword>
<keyword id="KW-0820">tRNA-binding</keyword>
<keyword id="KW-0862">Zinc</keyword>
<reference key="1">
    <citation type="journal article" date="2006" name="Proc. Natl. Acad. Sci. U.S.A.">
        <title>Molecular genetic anatomy of inter- and intraserotype variation in the human bacterial pathogen group A Streptococcus.</title>
        <authorList>
            <person name="Beres S.B."/>
            <person name="Richter E.W."/>
            <person name="Nagiec M.J."/>
            <person name="Sumby P."/>
            <person name="Porcella S.F."/>
            <person name="DeLeo F.R."/>
            <person name="Musser J.M."/>
        </authorList>
    </citation>
    <scope>NUCLEOTIDE SEQUENCE [LARGE SCALE GENOMIC DNA]</scope>
    <source>
        <strain>MGAS2096</strain>
    </source>
</reference>